<sequence length="664" mass="75208">MKTGLFFLCLLGTAAAIPTNARLLSDHSKPTAETVAPDNTAIPSLRAEAEENEKETAVSTEDDSHHKAEKSSVLKSKEESHEQSAEQGKSSSQELGLKDQEDSDGHLSVNLEYAPTEGTLDIKEDMSEPQEKKLSENTDFLAPGVSSFTDSNQQESITKREENQEQPRNYSHHQLNRSSKHSQGLRDQGNQEQDPNISNGEEEEEKEPGEVGTHNDNQERKTELPREHANSKQEEDNTQSDDILEESDQPTQVSKMQEDEFDQGNQEQEDNSNAEMEEENASNVNKHIQETEWQSQEGKTGLEAISNHKETEEKTVSEALLMEPTDDGNTTPRNHGVDDDGDDDGDDGGTDGPRHSASDDYFIPSQAFLEAERAQSIAYHLKIEEQREKVHENENIGTTEPGEHQEAKKAENSSNEEETSSEGNMRVHAVDSCMSFQCKRGHICKADQQGKPHCVCQDPVTCPPTKPLDQVCGTDNQTYASSCHLFATKCRLEGTKKGHQLQLDYFGACKSIPTCTDFEVIQFPLRMRDWLKNILMQLYEANSEHAGYLNEKQRNKVKKIYLDEKRLLAGDHPIDLLLRDFKKNYHMYVYPVHWQFSELDQHPMDRVLTHSELAPLRASLVPMEHCITRFFEECDPNKDKHITLKEWGHCFGIKEEDIDENLLF</sequence>
<feature type="signal peptide" evidence="4">
    <location>
        <begin position="1"/>
        <end position="16"/>
    </location>
</feature>
<feature type="chain" id="PRO_0000020312" description="SPARC-like protein 1">
    <location>
        <begin position="17"/>
        <end position="664"/>
    </location>
</feature>
<feature type="domain" description="Follistatin-like">
    <location>
        <begin position="432"/>
        <end position="454"/>
    </location>
</feature>
<feature type="domain" description="Kazal-like" evidence="6">
    <location>
        <begin position="450"/>
        <end position="511"/>
    </location>
</feature>
<feature type="domain" description="EF-hand" evidence="5">
    <location>
        <begin position="622"/>
        <end position="657"/>
    </location>
</feature>
<feature type="region of interest" description="O-glycosylated at one additional site">
    <location>
        <begin position="25"/>
        <end position="34"/>
    </location>
</feature>
<feature type="region of interest" description="Disordered" evidence="7">
    <location>
        <begin position="28"/>
        <end position="360"/>
    </location>
</feature>
<feature type="region of interest" description="Disordered" evidence="7">
    <location>
        <begin position="388"/>
        <end position="426"/>
    </location>
</feature>
<feature type="compositionally biased region" description="Basic and acidic residues" evidence="7">
    <location>
        <begin position="62"/>
        <end position="84"/>
    </location>
</feature>
<feature type="compositionally biased region" description="Polar residues" evidence="7">
    <location>
        <begin position="85"/>
        <end position="94"/>
    </location>
</feature>
<feature type="compositionally biased region" description="Basic and acidic residues" evidence="7">
    <location>
        <begin position="96"/>
        <end position="105"/>
    </location>
</feature>
<feature type="compositionally biased region" description="Basic and acidic residues" evidence="7">
    <location>
        <begin position="120"/>
        <end position="136"/>
    </location>
</feature>
<feature type="compositionally biased region" description="Polar residues" evidence="7">
    <location>
        <begin position="146"/>
        <end position="156"/>
    </location>
</feature>
<feature type="compositionally biased region" description="Basic residues" evidence="7">
    <location>
        <begin position="170"/>
        <end position="180"/>
    </location>
</feature>
<feature type="compositionally biased region" description="Polar residues" evidence="7">
    <location>
        <begin position="188"/>
        <end position="199"/>
    </location>
</feature>
<feature type="compositionally biased region" description="Basic and acidic residues" evidence="7">
    <location>
        <begin position="216"/>
        <end position="235"/>
    </location>
</feature>
<feature type="compositionally biased region" description="Acidic residues" evidence="7">
    <location>
        <begin position="236"/>
        <end position="248"/>
    </location>
</feature>
<feature type="compositionally biased region" description="Acidic residues" evidence="7">
    <location>
        <begin position="259"/>
        <end position="280"/>
    </location>
</feature>
<feature type="compositionally biased region" description="Basic and acidic residues" evidence="7">
    <location>
        <begin position="306"/>
        <end position="316"/>
    </location>
</feature>
<feature type="compositionally biased region" description="Acidic residues" evidence="7">
    <location>
        <begin position="339"/>
        <end position="349"/>
    </location>
</feature>
<feature type="compositionally biased region" description="Basic and acidic residues" evidence="7">
    <location>
        <begin position="401"/>
        <end position="411"/>
    </location>
</feature>
<feature type="binding site" evidence="5">
    <location>
        <position position="635"/>
    </location>
    <ligand>
        <name>Ca(2+)</name>
        <dbReference type="ChEBI" id="CHEBI:29108"/>
    </ligand>
</feature>
<feature type="binding site" evidence="5">
    <location>
        <position position="637"/>
    </location>
    <ligand>
        <name>Ca(2+)</name>
        <dbReference type="ChEBI" id="CHEBI:29108"/>
    </ligand>
</feature>
<feature type="binding site" evidence="5">
    <location>
        <position position="639"/>
    </location>
    <ligand>
        <name>Ca(2+)</name>
        <dbReference type="ChEBI" id="CHEBI:29108"/>
    </ligand>
</feature>
<feature type="binding site" evidence="5">
    <location>
        <position position="641"/>
    </location>
    <ligand>
        <name>Ca(2+)</name>
        <dbReference type="ChEBI" id="CHEBI:29108"/>
    </ligand>
</feature>
<feature type="binding site" evidence="5">
    <location>
        <position position="646"/>
    </location>
    <ligand>
        <name>Ca(2+)</name>
        <dbReference type="ChEBI" id="CHEBI:29108"/>
    </ligand>
</feature>
<feature type="modified residue" description="Phosphoserine" evidence="2">
    <location>
        <position position="76"/>
    </location>
</feature>
<feature type="modified residue" description="Phosphoserine" evidence="2">
    <location>
        <position position="84"/>
    </location>
</feature>
<feature type="modified residue" description="Phosphoserine" evidence="2">
    <location>
        <position position="92"/>
    </location>
</feature>
<feature type="modified residue" description="Phosphoserine" evidence="2">
    <location>
        <position position="171"/>
    </location>
</feature>
<feature type="modified residue" description="Phosphoserine" evidence="2">
    <location>
        <position position="272"/>
    </location>
</feature>
<feature type="modified residue" description="Phosphoserine" evidence="2">
    <location>
        <position position="358"/>
    </location>
</feature>
<feature type="modified residue" description="Phosphoserine" evidence="3">
    <location>
        <position position="365"/>
    </location>
</feature>
<feature type="modified residue" description="Phosphoserine" evidence="3">
    <location>
        <position position="420"/>
    </location>
</feature>
<feature type="glycosylation site" description="O-linked (GalNAc...) threonine" evidence="10">
    <location>
        <position position="31"/>
    </location>
</feature>
<feature type="glycosylation site" description="O-linked (GalNAc...) threonine" evidence="10">
    <location>
        <position position="40"/>
    </location>
</feature>
<feature type="glycosylation site" description="O-linked (GalNAc...) serine" evidence="10">
    <location>
        <position position="44"/>
    </location>
</feature>
<feature type="glycosylation site" description="O-linked (GalNAc...) threonine" evidence="10">
    <location>
        <position position="116"/>
    </location>
</feature>
<feature type="glycosylation site" description="N-linked (GlcNAc...) asparagine" evidence="4">
    <location>
        <position position="169"/>
    </location>
</feature>
<feature type="glycosylation site" description="N-linked (GlcNAc...) asparagine" evidence="4">
    <location>
        <position position="176"/>
    </location>
</feature>
<feature type="glycosylation site" description="N-linked (GlcNAc...) asparagine" evidence="4">
    <location>
        <position position="196"/>
    </location>
</feature>
<feature type="glycosylation site" description="N-linked (GlcNAc...) asparagine" evidence="4">
    <location>
        <position position="280"/>
    </location>
</feature>
<feature type="glycosylation site" description="O-linked (GalNAc...) threonine">
    <location>
        <position position="331"/>
    </location>
</feature>
<feature type="glycosylation site" description="O-linked (GalNAc...) threonine" evidence="9 10">
    <location>
        <position position="398"/>
    </location>
</feature>
<feature type="glycosylation site" description="N-linked (GlcNAc...) asparagine" evidence="8">
    <location>
        <position position="412"/>
    </location>
</feature>
<feature type="glycosylation site" description="N-linked (GlcNAc...) asparagine" evidence="4">
    <location>
        <position position="476"/>
    </location>
</feature>
<feature type="disulfide bond" evidence="6">
    <location>
        <begin position="433"/>
        <end position="444"/>
    </location>
</feature>
<feature type="disulfide bond" evidence="6">
    <location>
        <begin position="438"/>
        <end position="454"/>
    </location>
</feature>
<feature type="disulfide bond" evidence="6">
    <location>
        <begin position="456"/>
        <end position="490"/>
    </location>
</feature>
<feature type="disulfide bond" evidence="6">
    <location>
        <begin position="462"/>
        <end position="483"/>
    </location>
</feature>
<feature type="disulfide bond" evidence="6">
    <location>
        <begin position="472"/>
        <end position="509"/>
    </location>
</feature>
<feature type="disulfide bond" evidence="6">
    <location>
        <begin position="515"/>
        <end position="626"/>
    </location>
</feature>
<feature type="disulfide bond" evidence="6">
    <location>
        <begin position="634"/>
        <end position="650"/>
    </location>
</feature>
<feature type="splice variant" id="VSP_056678" description="In isoform 2." evidence="12">
    <location>
        <begin position="1"/>
        <end position="125"/>
    </location>
</feature>
<feature type="sequence variant" id="VAR_016107" description="In dbSNP:rs13051." evidence="11">
    <original>A</original>
    <variation>D</variation>
    <location>
        <position position="49"/>
    </location>
</feature>
<feature type="sequence variant" id="VAR_058849" description="In dbSNP:rs1049544." evidence="11">
    <original>H</original>
    <variation>D</variation>
    <location>
        <position position="106"/>
    </location>
</feature>
<feature type="sequence variant" id="VAR_056578" description="In dbSNP:rs1130643.">
    <original>T</original>
    <variation>A</variation>
    <location>
        <position position="419"/>
    </location>
</feature>
<feature type="sequence conflict" description="In Ref. 2; CAA60386." evidence="13" ref="2">
    <original>L</original>
    <variation>P</variation>
    <location>
        <position position="5"/>
    </location>
</feature>
<feature type="sequence conflict" description="In Ref. 2; CAA60386." evidence="13" ref="2">
    <original>R</original>
    <variation>W</variation>
    <location>
        <position position="46"/>
    </location>
</feature>
<feature type="sequence conflict" description="In Ref. 1; CAA57650." evidence="13" ref="1">
    <original>T</original>
    <variation>S</variation>
    <location>
        <position position="116"/>
    </location>
</feature>
<feature type="sequence conflict" description="In Ref. 2; CAA60386." evidence="13" ref="2">
    <original>S</original>
    <variation>I</variation>
    <location>
        <position position="127"/>
    </location>
</feature>
<feature type="turn" evidence="14">
    <location>
        <begin position="432"/>
        <end position="435"/>
    </location>
</feature>
<feature type="strand" evidence="14">
    <location>
        <begin position="442"/>
        <end position="446"/>
    </location>
</feature>
<feature type="strand" evidence="14">
    <location>
        <begin position="452"/>
        <end position="456"/>
    </location>
</feature>
<feature type="helix" evidence="14">
    <location>
        <begin position="459"/>
        <end position="461"/>
    </location>
</feature>
<feature type="helix" evidence="14">
    <location>
        <begin position="467"/>
        <end position="469"/>
    </location>
</feature>
<feature type="strand" evidence="14">
    <location>
        <begin position="471"/>
        <end position="473"/>
    </location>
</feature>
<feature type="strand" evidence="14">
    <location>
        <begin position="478"/>
        <end position="481"/>
    </location>
</feature>
<feature type="helix" evidence="14">
    <location>
        <begin position="482"/>
        <end position="491"/>
    </location>
</feature>
<feature type="turn" evidence="14">
    <location>
        <begin position="492"/>
        <end position="494"/>
    </location>
</feature>
<feature type="helix" evidence="14">
    <location>
        <begin position="496"/>
        <end position="500"/>
    </location>
</feature>
<feature type="strand" evidence="14">
    <location>
        <begin position="503"/>
        <end position="508"/>
    </location>
</feature>
<feature type="helix" evidence="14">
    <location>
        <begin position="517"/>
        <end position="520"/>
    </location>
</feature>
<feature type="helix" evidence="14">
    <location>
        <begin position="525"/>
        <end position="542"/>
    </location>
</feature>
<feature type="turn" evidence="14">
    <location>
        <begin position="558"/>
        <end position="561"/>
    </location>
</feature>
<feature type="helix" evidence="14">
    <location>
        <begin position="562"/>
        <end position="568"/>
    </location>
</feature>
<feature type="helix" evidence="14">
    <location>
        <begin position="573"/>
        <end position="577"/>
    </location>
</feature>
<feature type="turn" evidence="14">
    <location>
        <begin position="578"/>
        <end position="580"/>
    </location>
</feature>
<feature type="helix" evidence="14">
    <location>
        <begin position="581"/>
        <end position="583"/>
    </location>
</feature>
<feature type="turn" evidence="14">
    <location>
        <begin position="585"/>
        <end position="588"/>
    </location>
</feature>
<feature type="helix" evidence="14">
    <location>
        <begin position="589"/>
        <end position="599"/>
    </location>
</feature>
<feature type="strand" evidence="14">
    <location>
        <begin position="605"/>
        <end position="608"/>
    </location>
</feature>
<feature type="helix" evidence="14">
    <location>
        <begin position="610"/>
        <end position="624"/>
    </location>
</feature>
<feature type="helix" evidence="14">
    <location>
        <begin position="630"/>
        <end position="633"/>
    </location>
</feature>
<feature type="helix" evidence="14">
    <location>
        <begin position="644"/>
        <end position="650"/>
    </location>
</feature>
<feature type="helix" evidence="14">
    <location>
        <begin position="655"/>
        <end position="657"/>
    </location>
</feature>
<feature type="helix" evidence="14">
    <location>
        <begin position="660"/>
        <end position="662"/>
    </location>
</feature>
<evidence type="ECO:0000250" key="1"/>
<evidence type="ECO:0000250" key="2">
    <source>
        <dbReference type="UniProtKB" id="P24054"/>
    </source>
</evidence>
<evidence type="ECO:0000250" key="3">
    <source>
        <dbReference type="UniProtKB" id="P70663"/>
    </source>
</evidence>
<evidence type="ECO:0000255" key="4"/>
<evidence type="ECO:0000255" key="5">
    <source>
        <dbReference type="PROSITE-ProRule" id="PRU00448"/>
    </source>
</evidence>
<evidence type="ECO:0000255" key="6">
    <source>
        <dbReference type="PROSITE-ProRule" id="PRU00798"/>
    </source>
</evidence>
<evidence type="ECO:0000256" key="7">
    <source>
        <dbReference type="SAM" id="MobiDB-lite"/>
    </source>
</evidence>
<evidence type="ECO:0000269" key="8">
    <source>
    </source>
</evidence>
<evidence type="ECO:0000269" key="9">
    <source>
    </source>
</evidence>
<evidence type="ECO:0000269" key="10">
    <source>
    </source>
</evidence>
<evidence type="ECO:0000269" key="11">
    <source>
    </source>
</evidence>
<evidence type="ECO:0000303" key="12">
    <source>
    </source>
</evidence>
<evidence type="ECO:0000305" key="13"/>
<evidence type="ECO:0007829" key="14">
    <source>
        <dbReference type="PDB" id="7KBU"/>
    </source>
</evidence>
<gene>
    <name type="primary">SPARCL1</name>
</gene>
<reference key="1">
    <citation type="journal article" date="1995" name="Immunity">
        <title>Cloning from purified high endothelial venule cells of hevin, a close relative of the antiadhesive extracellular matrix protein SPARC.</title>
        <authorList>
            <person name="Girard J.-P."/>
            <person name="Springer T.A."/>
        </authorList>
    </citation>
    <scope>NUCLEOTIDE SEQUENCE [MRNA] (ISOFORM 1)</scope>
    <scope>VARIANTS ASP-49 AND ASP-106</scope>
    <source>
        <tissue>Tonsil</tissue>
    </source>
</reference>
<reference key="2">
    <citation type="submission" date="1995-04" db="EMBL/GenBank/DDBJ databases">
        <title>An alternative PCR-based method for the direct isolation of cDNA ends (DICE).</title>
        <authorList>
            <person name="Schraml P."/>
            <person name="Shipman R."/>
            <person name="Ludwig C.U."/>
        </authorList>
    </citation>
    <scope>NUCLEOTIDE SEQUENCE [MRNA] (ISOFORM 1)</scope>
    <source>
        <tissue>Lung</tissue>
    </source>
</reference>
<reference key="3">
    <citation type="journal article" date="2004" name="Nat. Genet.">
        <title>Complete sequencing and characterization of 21,243 full-length human cDNAs.</title>
        <authorList>
            <person name="Ota T."/>
            <person name="Suzuki Y."/>
            <person name="Nishikawa T."/>
            <person name="Otsuki T."/>
            <person name="Sugiyama T."/>
            <person name="Irie R."/>
            <person name="Wakamatsu A."/>
            <person name="Hayashi K."/>
            <person name="Sato H."/>
            <person name="Nagai K."/>
            <person name="Kimura K."/>
            <person name="Makita H."/>
            <person name="Sekine M."/>
            <person name="Obayashi M."/>
            <person name="Nishi T."/>
            <person name="Shibahara T."/>
            <person name="Tanaka T."/>
            <person name="Ishii S."/>
            <person name="Yamamoto J."/>
            <person name="Saito K."/>
            <person name="Kawai Y."/>
            <person name="Isono Y."/>
            <person name="Nakamura Y."/>
            <person name="Nagahari K."/>
            <person name="Murakami K."/>
            <person name="Yasuda T."/>
            <person name="Iwayanagi T."/>
            <person name="Wagatsuma M."/>
            <person name="Shiratori A."/>
            <person name="Sudo H."/>
            <person name="Hosoiri T."/>
            <person name="Kaku Y."/>
            <person name="Kodaira H."/>
            <person name="Kondo H."/>
            <person name="Sugawara M."/>
            <person name="Takahashi M."/>
            <person name="Kanda K."/>
            <person name="Yokoi T."/>
            <person name="Furuya T."/>
            <person name="Kikkawa E."/>
            <person name="Omura Y."/>
            <person name="Abe K."/>
            <person name="Kamihara K."/>
            <person name="Katsuta N."/>
            <person name="Sato K."/>
            <person name="Tanikawa M."/>
            <person name="Yamazaki M."/>
            <person name="Ninomiya K."/>
            <person name="Ishibashi T."/>
            <person name="Yamashita H."/>
            <person name="Murakawa K."/>
            <person name="Fujimori K."/>
            <person name="Tanai H."/>
            <person name="Kimata M."/>
            <person name="Watanabe M."/>
            <person name="Hiraoka S."/>
            <person name="Chiba Y."/>
            <person name="Ishida S."/>
            <person name="Ono Y."/>
            <person name="Takiguchi S."/>
            <person name="Watanabe S."/>
            <person name="Yosida M."/>
            <person name="Hotuta T."/>
            <person name="Kusano J."/>
            <person name="Kanehori K."/>
            <person name="Takahashi-Fujii A."/>
            <person name="Hara H."/>
            <person name="Tanase T.-O."/>
            <person name="Nomura Y."/>
            <person name="Togiya S."/>
            <person name="Komai F."/>
            <person name="Hara R."/>
            <person name="Takeuchi K."/>
            <person name="Arita M."/>
            <person name="Imose N."/>
            <person name="Musashino K."/>
            <person name="Yuuki H."/>
            <person name="Oshima A."/>
            <person name="Sasaki N."/>
            <person name="Aotsuka S."/>
            <person name="Yoshikawa Y."/>
            <person name="Matsunawa H."/>
            <person name="Ichihara T."/>
            <person name="Shiohata N."/>
            <person name="Sano S."/>
            <person name="Moriya S."/>
            <person name="Momiyama H."/>
            <person name="Satoh N."/>
            <person name="Takami S."/>
            <person name="Terashima Y."/>
            <person name="Suzuki O."/>
            <person name="Nakagawa S."/>
            <person name="Senoh A."/>
            <person name="Mizoguchi H."/>
            <person name="Goto Y."/>
            <person name="Shimizu F."/>
            <person name="Wakebe H."/>
            <person name="Hishigaki H."/>
            <person name="Watanabe T."/>
            <person name="Sugiyama A."/>
            <person name="Takemoto M."/>
            <person name="Kawakami B."/>
            <person name="Yamazaki M."/>
            <person name="Watanabe K."/>
            <person name="Kumagai A."/>
            <person name="Itakura S."/>
            <person name="Fukuzumi Y."/>
            <person name="Fujimori Y."/>
            <person name="Komiyama M."/>
            <person name="Tashiro H."/>
            <person name="Tanigami A."/>
            <person name="Fujiwara T."/>
            <person name="Ono T."/>
            <person name="Yamada K."/>
            <person name="Fujii Y."/>
            <person name="Ozaki K."/>
            <person name="Hirao M."/>
            <person name="Ohmori Y."/>
            <person name="Kawabata A."/>
            <person name="Hikiji T."/>
            <person name="Kobatake N."/>
            <person name="Inagaki H."/>
            <person name="Ikema Y."/>
            <person name="Okamoto S."/>
            <person name="Okitani R."/>
            <person name="Kawakami T."/>
            <person name="Noguchi S."/>
            <person name="Itoh T."/>
            <person name="Shigeta K."/>
            <person name="Senba T."/>
            <person name="Matsumura K."/>
            <person name="Nakajima Y."/>
            <person name="Mizuno T."/>
            <person name="Morinaga M."/>
            <person name="Sasaki M."/>
            <person name="Togashi T."/>
            <person name="Oyama M."/>
            <person name="Hata H."/>
            <person name="Watanabe M."/>
            <person name="Komatsu T."/>
            <person name="Mizushima-Sugano J."/>
            <person name="Satoh T."/>
            <person name="Shirai Y."/>
            <person name="Takahashi Y."/>
            <person name="Nakagawa K."/>
            <person name="Okumura K."/>
            <person name="Nagase T."/>
            <person name="Nomura N."/>
            <person name="Kikuchi H."/>
            <person name="Masuho Y."/>
            <person name="Yamashita R."/>
            <person name="Nakai K."/>
            <person name="Yada T."/>
            <person name="Nakamura Y."/>
            <person name="Ohara O."/>
            <person name="Isogai T."/>
            <person name="Sugano S."/>
        </authorList>
    </citation>
    <scope>NUCLEOTIDE SEQUENCE [LARGE SCALE MRNA] (ISOFORM 2)</scope>
    <source>
        <tissue>Uterus</tissue>
    </source>
</reference>
<reference key="4">
    <citation type="journal article" date="2005" name="Nature">
        <title>Generation and annotation of the DNA sequences of human chromosomes 2 and 4.</title>
        <authorList>
            <person name="Hillier L.W."/>
            <person name="Graves T.A."/>
            <person name="Fulton R.S."/>
            <person name="Fulton L.A."/>
            <person name="Pepin K.H."/>
            <person name="Minx P."/>
            <person name="Wagner-McPherson C."/>
            <person name="Layman D."/>
            <person name="Wylie K."/>
            <person name="Sekhon M."/>
            <person name="Becker M.C."/>
            <person name="Fewell G.A."/>
            <person name="Delehaunty K.D."/>
            <person name="Miner T.L."/>
            <person name="Nash W.E."/>
            <person name="Kremitzki C."/>
            <person name="Oddy L."/>
            <person name="Du H."/>
            <person name="Sun H."/>
            <person name="Bradshaw-Cordum H."/>
            <person name="Ali J."/>
            <person name="Carter J."/>
            <person name="Cordes M."/>
            <person name="Harris A."/>
            <person name="Isak A."/>
            <person name="van Brunt A."/>
            <person name="Nguyen C."/>
            <person name="Du F."/>
            <person name="Courtney L."/>
            <person name="Kalicki J."/>
            <person name="Ozersky P."/>
            <person name="Abbott S."/>
            <person name="Armstrong J."/>
            <person name="Belter E.A."/>
            <person name="Caruso L."/>
            <person name="Cedroni M."/>
            <person name="Cotton M."/>
            <person name="Davidson T."/>
            <person name="Desai A."/>
            <person name="Elliott G."/>
            <person name="Erb T."/>
            <person name="Fronick C."/>
            <person name="Gaige T."/>
            <person name="Haakenson W."/>
            <person name="Haglund K."/>
            <person name="Holmes A."/>
            <person name="Harkins R."/>
            <person name="Kim K."/>
            <person name="Kruchowski S.S."/>
            <person name="Strong C.M."/>
            <person name="Grewal N."/>
            <person name="Goyea E."/>
            <person name="Hou S."/>
            <person name="Levy A."/>
            <person name="Martinka S."/>
            <person name="Mead K."/>
            <person name="McLellan M.D."/>
            <person name="Meyer R."/>
            <person name="Randall-Maher J."/>
            <person name="Tomlinson C."/>
            <person name="Dauphin-Kohlberg S."/>
            <person name="Kozlowicz-Reilly A."/>
            <person name="Shah N."/>
            <person name="Swearengen-Shahid S."/>
            <person name="Snider J."/>
            <person name="Strong J.T."/>
            <person name="Thompson J."/>
            <person name="Yoakum M."/>
            <person name="Leonard S."/>
            <person name="Pearman C."/>
            <person name="Trani L."/>
            <person name="Radionenko M."/>
            <person name="Waligorski J.E."/>
            <person name="Wang C."/>
            <person name="Rock S.M."/>
            <person name="Tin-Wollam A.-M."/>
            <person name="Maupin R."/>
            <person name="Latreille P."/>
            <person name="Wendl M.C."/>
            <person name="Yang S.-P."/>
            <person name="Pohl C."/>
            <person name="Wallis J.W."/>
            <person name="Spieth J."/>
            <person name="Bieri T.A."/>
            <person name="Berkowicz N."/>
            <person name="Nelson J.O."/>
            <person name="Osborne J."/>
            <person name="Ding L."/>
            <person name="Meyer R."/>
            <person name="Sabo A."/>
            <person name="Shotland Y."/>
            <person name="Sinha P."/>
            <person name="Wohldmann P.E."/>
            <person name="Cook L.L."/>
            <person name="Hickenbotham M.T."/>
            <person name="Eldred J."/>
            <person name="Williams D."/>
            <person name="Jones T.A."/>
            <person name="She X."/>
            <person name="Ciccarelli F.D."/>
            <person name="Izaurralde E."/>
            <person name="Taylor J."/>
            <person name="Schmutz J."/>
            <person name="Myers R.M."/>
            <person name="Cox D.R."/>
            <person name="Huang X."/>
            <person name="McPherson J.D."/>
            <person name="Mardis E.R."/>
            <person name="Clifton S.W."/>
            <person name="Warren W.C."/>
            <person name="Chinwalla A.T."/>
            <person name="Eddy S.R."/>
            <person name="Marra M.A."/>
            <person name="Ovcharenko I."/>
            <person name="Furey T.S."/>
            <person name="Miller W."/>
            <person name="Eichler E.E."/>
            <person name="Bork P."/>
            <person name="Suyama M."/>
            <person name="Torrents D."/>
            <person name="Waterston R.H."/>
            <person name="Wilson R.K."/>
        </authorList>
    </citation>
    <scope>NUCLEOTIDE SEQUENCE [LARGE SCALE GENOMIC DNA]</scope>
</reference>
<reference key="5">
    <citation type="journal article" date="2005" name="J. Proteome Res.">
        <title>Human plasma N-glycoproteome analysis by immunoaffinity subtraction, hydrazide chemistry, and mass spectrometry.</title>
        <authorList>
            <person name="Liu T."/>
            <person name="Qian W.-J."/>
            <person name="Gritsenko M.A."/>
            <person name="Camp D.G. II"/>
            <person name="Monroe M.E."/>
            <person name="Moore R.J."/>
            <person name="Smith R.D."/>
        </authorList>
    </citation>
    <scope>GLYCOSYLATION [LARGE SCALE ANALYSIS] AT ASN-412</scope>
    <source>
        <tissue>Plasma</tissue>
    </source>
</reference>
<reference key="6">
    <citation type="journal article" date="2009" name="Nat. Methods">
        <title>Enrichment of glycopeptides for glycan structure and attachment site identification.</title>
        <authorList>
            <person name="Nilsson J."/>
            <person name="Rueetschi U."/>
            <person name="Halim A."/>
            <person name="Hesse C."/>
            <person name="Carlsohn E."/>
            <person name="Brinkmalm G."/>
            <person name="Larson G."/>
        </authorList>
    </citation>
    <scope>GLYCOSYLATION [LARGE SCALE ANALYSIS] AT THR-398</scope>
    <scope>STRUCTURE OF CARBOHYDRATES</scope>
    <source>
        <tissue>Cerebrospinal fluid</tissue>
    </source>
</reference>
<reference key="7">
    <citation type="journal article" date="2013" name="J. Proteome Res.">
        <title>LC-MS/MS characterization of O-glycosylation sites and glycan structures of human cerebrospinal fluid glycoproteins.</title>
        <authorList>
            <person name="Halim A."/>
            <person name="Ruetschi U."/>
            <person name="Larson G."/>
            <person name="Nilsson J."/>
        </authorList>
    </citation>
    <scope>GLYCOSYLATION AT THR-31; THR-40; SER-44; THR-116 AND THR-398</scope>
    <scope>IDENTIFICATION BY MASS SPECTROMETRY</scope>
</reference>
<accession>Q14515</accession>
<accession>B4E2Z0</accession>
<accession>E7ESU2</accession>
<accession>Q14800</accession>
<proteinExistence type="evidence at protein level"/>
<comment type="interaction">
    <interactant intactId="EBI-2682673">
        <id>Q14515</id>
    </interactant>
    <interactant intactId="EBI-11692272">
        <id>Q99972</id>
        <label>MYOC</label>
    </interactant>
    <organismsDiffer>false</organismsDiffer>
    <experiments>2</experiments>
</comment>
<comment type="subcellular location">
    <subcellularLocation>
        <location evidence="1">Secreted</location>
        <location evidence="1">Extracellular space</location>
        <location evidence="1">Extracellular matrix</location>
    </subcellularLocation>
</comment>
<comment type="alternative products">
    <event type="alternative splicing"/>
    <isoform>
        <id>Q14515-1</id>
        <name>1</name>
        <sequence type="displayed"/>
    </isoform>
    <isoform>
        <id>Q14515-2</id>
        <name>2</name>
        <sequence type="described" ref="VSP_056678"/>
    </isoform>
</comment>
<comment type="tissue specificity">
    <text>Highly expressed in lymph node, brain, heart, lung, skeletal muscle, ovary, small intestine, and colon, with lower levels in placenta, pancreas, testis, spleen, and thymus, and no expression in kidney, liver, and peripheral blood leukocytes.</text>
</comment>
<comment type="PTM">
    <text evidence="8 9 10">N- and O-glycosylated. O-glycosylated with a core 1 or possibly core 8 glycan.</text>
</comment>
<comment type="similarity">
    <text evidence="13">Belongs to the SPARC family.</text>
</comment>
<name>SPRL1_HUMAN</name>
<keyword id="KW-0002">3D-structure</keyword>
<keyword id="KW-0025">Alternative splicing</keyword>
<keyword id="KW-0106">Calcium</keyword>
<keyword id="KW-1015">Disulfide bond</keyword>
<keyword id="KW-0272">Extracellular matrix</keyword>
<keyword id="KW-0325">Glycoprotein</keyword>
<keyword id="KW-0479">Metal-binding</keyword>
<keyword id="KW-0597">Phosphoprotein</keyword>
<keyword id="KW-1267">Proteomics identification</keyword>
<keyword id="KW-1185">Reference proteome</keyword>
<keyword id="KW-0964">Secreted</keyword>
<keyword id="KW-0732">Signal</keyword>
<protein>
    <recommendedName>
        <fullName>SPARC-like protein 1</fullName>
    </recommendedName>
    <alternativeName>
        <fullName>High endothelial venule protein</fullName>
        <shortName>Hevin</shortName>
    </alternativeName>
    <alternativeName>
        <fullName>MAST 9</fullName>
    </alternativeName>
</protein>
<organism>
    <name type="scientific">Homo sapiens</name>
    <name type="common">Human</name>
    <dbReference type="NCBI Taxonomy" id="9606"/>
    <lineage>
        <taxon>Eukaryota</taxon>
        <taxon>Metazoa</taxon>
        <taxon>Chordata</taxon>
        <taxon>Craniata</taxon>
        <taxon>Vertebrata</taxon>
        <taxon>Euteleostomi</taxon>
        <taxon>Mammalia</taxon>
        <taxon>Eutheria</taxon>
        <taxon>Euarchontoglires</taxon>
        <taxon>Primates</taxon>
        <taxon>Haplorrhini</taxon>
        <taxon>Catarrhini</taxon>
        <taxon>Hominidae</taxon>
        <taxon>Homo</taxon>
    </lineage>
</organism>
<dbReference type="EMBL" id="X82157">
    <property type="protein sequence ID" value="CAA57650.1"/>
    <property type="molecule type" value="mRNA"/>
</dbReference>
<dbReference type="EMBL" id="X86693">
    <property type="protein sequence ID" value="CAA60386.1"/>
    <property type="molecule type" value="mRNA"/>
</dbReference>
<dbReference type="EMBL" id="AK304494">
    <property type="protein sequence ID" value="BAG65302.1"/>
    <property type="molecule type" value="mRNA"/>
</dbReference>
<dbReference type="EMBL" id="AC093906">
    <property type="status" value="NOT_ANNOTATED_CDS"/>
    <property type="molecule type" value="Genomic_DNA"/>
</dbReference>
<dbReference type="EMBL" id="AC112250">
    <property type="status" value="NOT_ANNOTATED_CDS"/>
    <property type="molecule type" value="Genomic_DNA"/>
</dbReference>
<dbReference type="CCDS" id="CCDS3622.1">
    <molecule id="Q14515-1"/>
</dbReference>
<dbReference type="CCDS" id="CCDS77939.1">
    <molecule id="Q14515-2"/>
</dbReference>
<dbReference type="PIR" id="S60062">
    <property type="entry name" value="S60062"/>
</dbReference>
<dbReference type="RefSeq" id="NP_001121782.1">
    <molecule id="Q14515-1"/>
    <property type="nucleotide sequence ID" value="NM_001128310.3"/>
</dbReference>
<dbReference type="RefSeq" id="NP_001278905.1">
    <molecule id="Q14515-2"/>
    <property type="nucleotide sequence ID" value="NM_001291976.2"/>
</dbReference>
<dbReference type="RefSeq" id="NP_001278906.1">
    <molecule id="Q14515-2"/>
    <property type="nucleotide sequence ID" value="NM_001291977.2"/>
</dbReference>
<dbReference type="RefSeq" id="NP_004675.3">
    <molecule id="Q14515-1"/>
    <property type="nucleotide sequence ID" value="NM_004684.5"/>
</dbReference>
<dbReference type="PDB" id="7KBU">
    <property type="method" value="X-ray"/>
    <property type="resolution" value="2.27 A"/>
    <property type="chains" value="A/B=431-663"/>
</dbReference>
<dbReference type="PDBsum" id="7KBU"/>
<dbReference type="SMR" id="Q14515"/>
<dbReference type="BioGRID" id="113992">
    <property type="interactions" value="17"/>
</dbReference>
<dbReference type="FunCoup" id="Q14515">
    <property type="interactions" value="87"/>
</dbReference>
<dbReference type="IntAct" id="Q14515">
    <property type="interactions" value="22"/>
</dbReference>
<dbReference type="MINT" id="Q14515"/>
<dbReference type="STRING" id="9606.ENSP00000414856"/>
<dbReference type="TCDB" id="8.A.74.1.5">
    <property type="family name" value="the tm9 or phg1 targeting receptor (phg1) family"/>
</dbReference>
<dbReference type="GlyConnect" id="728">
    <property type="glycosylation" value="1 N-Linked glycan (1 site), 3 O-Linked glycans (6 sites)"/>
</dbReference>
<dbReference type="GlyCosmos" id="Q14515">
    <property type="glycosylation" value="18 sites, 8 glycans"/>
</dbReference>
<dbReference type="GlyGen" id="Q14515">
    <property type="glycosylation" value="19 sites, 12 N-linked glycans (3 sites), 7 O-linked glycans (12 sites)"/>
</dbReference>
<dbReference type="iPTMnet" id="Q14515"/>
<dbReference type="PhosphoSitePlus" id="Q14515"/>
<dbReference type="BioMuta" id="SPARCL1"/>
<dbReference type="DMDM" id="259016170"/>
<dbReference type="jPOST" id="Q14515"/>
<dbReference type="MassIVE" id="Q14515"/>
<dbReference type="PaxDb" id="9606-ENSP00000414856"/>
<dbReference type="PeptideAtlas" id="Q14515"/>
<dbReference type="ProteomicsDB" id="5865"/>
<dbReference type="ProteomicsDB" id="60018">
    <molecule id="Q14515-1"/>
</dbReference>
<dbReference type="Antibodypedia" id="25430">
    <property type="antibodies" value="277 antibodies from 32 providers"/>
</dbReference>
<dbReference type="DNASU" id="8404"/>
<dbReference type="Ensembl" id="ENST00000282470.11">
    <molecule id="Q14515-1"/>
    <property type="protein sequence ID" value="ENSP00000282470.6"/>
    <property type="gene ID" value="ENSG00000152583.13"/>
</dbReference>
<dbReference type="Ensembl" id="ENST00000418378.5">
    <molecule id="Q14515-1"/>
    <property type="protein sequence ID" value="ENSP00000414856.1"/>
    <property type="gene ID" value="ENSG00000152583.13"/>
</dbReference>
<dbReference type="Ensembl" id="ENST00000503414.5">
    <molecule id="Q14515-2"/>
    <property type="protein sequence ID" value="ENSP00000422903.1"/>
    <property type="gene ID" value="ENSG00000152583.13"/>
</dbReference>
<dbReference type="GeneID" id="8404"/>
<dbReference type="KEGG" id="hsa:8404"/>
<dbReference type="MANE-Select" id="ENST00000282470.11">
    <property type="protein sequence ID" value="ENSP00000282470.6"/>
    <property type="RefSeq nucleotide sequence ID" value="NM_004684.6"/>
    <property type="RefSeq protein sequence ID" value="NP_004675.3"/>
</dbReference>
<dbReference type="UCSC" id="uc003hqs.5">
    <molecule id="Q14515-1"/>
    <property type="organism name" value="human"/>
</dbReference>
<dbReference type="AGR" id="HGNC:11220"/>
<dbReference type="CTD" id="8404"/>
<dbReference type="DisGeNET" id="8404"/>
<dbReference type="GeneCards" id="SPARCL1"/>
<dbReference type="HGNC" id="HGNC:11220">
    <property type="gene designation" value="SPARCL1"/>
</dbReference>
<dbReference type="HPA" id="ENSG00000152583">
    <property type="expression patterns" value="Low tissue specificity"/>
</dbReference>
<dbReference type="MalaCards" id="SPARCL1"/>
<dbReference type="MIM" id="606041">
    <property type="type" value="gene"/>
</dbReference>
<dbReference type="neXtProt" id="NX_Q14515"/>
<dbReference type="OpenTargets" id="ENSG00000152583"/>
<dbReference type="PharmGKB" id="PA36056"/>
<dbReference type="VEuPathDB" id="HostDB:ENSG00000152583"/>
<dbReference type="eggNOG" id="KOG4004">
    <property type="taxonomic scope" value="Eukaryota"/>
</dbReference>
<dbReference type="GeneTree" id="ENSGT00510000046787"/>
<dbReference type="HOGENOM" id="CLU_026297_0_1_1"/>
<dbReference type="InParanoid" id="Q14515"/>
<dbReference type="OMA" id="QCKRGHV"/>
<dbReference type="OrthoDB" id="9972865at2759"/>
<dbReference type="PAN-GO" id="Q14515">
    <property type="GO annotations" value="5 GO annotations based on evolutionary models"/>
</dbReference>
<dbReference type="PhylomeDB" id="Q14515"/>
<dbReference type="TreeFam" id="TF319356"/>
<dbReference type="PathwayCommons" id="Q14515"/>
<dbReference type="Reactome" id="R-HSA-381426">
    <property type="pathway name" value="Regulation of Insulin-like Growth Factor (IGF) transport and uptake by Insulin-like Growth Factor Binding Proteins (IGFBPs)"/>
</dbReference>
<dbReference type="Reactome" id="R-HSA-8957275">
    <property type="pathway name" value="Post-translational protein phosphorylation"/>
</dbReference>
<dbReference type="SignaLink" id="Q14515"/>
<dbReference type="BioGRID-ORCS" id="8404">
    <property type="hits" value="13 hits in 1144 CRISPR screens"/>
</dbReference>
<dbReference type="ChiTaRS" id="SPARCL1">
    <property type="organism name" value="human"/>
</dbReference>
<dbReference type="GeneWiki" id="SPARCL1"/>
<dbReference type="GenomeRNAi" id="8404"/>
<dbReference type="Pharos" id="Q14515">
    <property type="development level" value="Tbio"/>
</dbReference>
<dbReference type="PRO" id="PR:Q14515"/>
<dbReference type="Proteomes" id="UP000005640">
    <property type="component" value="Chromosome 4"/>
</dbReference>
<dbReference type="RNAct" id="Q14515">
    <property type="molecule type" value="protein"/>
</dbReference>
<dbReference type="Bgee" id="ENSG00000152583">
    <property type="expression patterns" value="Expressed in middle temporal gyrus and 215 other cell types or tissues"/>
</dbReference>
<dbReference type="ExpressionAtlas" id="Q14515">
    <property type="expression patterns" value="baseline and differential"/>
</dbReference>
<dbReference type="GO" id="GO:0005788">
    <property type="term" value="C:endoplasmic reticulum lumen"/>
    <property type="evidence" value="ECO:0000304"/>
    <property type="project" value="Reactome"/>
</dbReference>
<dbReference type="GO" id="GO:0005576">
    <property type="term" value="C:extracellular region"/>
    <property type="evidence" value="ECO:0007005"/>
    <property type="project" value="BHF-UCL"/>
</dbReference>
<dbReference type="GO" id="GO:0005615">
    <property type="term" value="C:extracellular space"/>
    <property type="evidence" value="ECO:0007005"/>
    <property type="project" value="UniProtKB"/>
</dbReference>
<dbReference type="GO" id="GO:0098978">
    <property type="term" value="C:glutamatergic synapse"/>
    <property type="evidence" value="ECO:0007669"/>
    <property type="project" value="Ensembl"/>
</dbReference>
<dbReference type="GO" id="GO:0005509">
    <property type="term" value="F:calcium ion binding"/>
    <property type="evidence" value="ECO:0000318"/>
    <property type="project" value="GO_Central"/>
</dbReference>
<dbReference type="GO" id="GO:0005518">
    <property type="term" value="F:collagen binding"/>
    <property type="evidence" value="ECO:0000318"/>
    <property type="project" value="GO_Central"/>
</dbReference>
<dbReference type="GO" id="GO:0050840">
    <property type="term" value="F:extracellular matrix binding"/>
    <property type="evidence" value="ECO:0000318"/>
    <property type="project" value="GO_Central"/>
</dbReference>
<dbReference type="GO" id="GO:0050807">
    <property type="term" value="P:regulation of synapse organization"/>
    <property type="evidence" value="ECO:0000318"/>
    <property type="project" value="GO_Central"/>
</dbReference>
<dbReference type="GO" id="GO:0007165">
    <property type="term" value="P:signal transduction"/>
    <property type="evidence" value="ECO:0007669"/>
    <property type="project" value="InterPro"/>
</dbReference>
<dbReference type="GO" id="GO:0099560">
    <property type="term" value="P:synaptic membrane adhesion"/>
    <property type="evidence" value="ECO:0007669"/>
    <property type="project" value="Ensembl"/>
</dbReference>
<dbReference type="CDD" id="cd16231">
    <property type="entry name" value="EFh_SPARC_like"/>
    <property type="match status" value="1"/>
</dbReference>
<dbReference type="FunFam" id="1.10.238.10:FF:000068">
    <property type="entry name" value="SPARC isoform 1"/>
    <property type="match status" value="1"/>
</dbReference>
<dbReference type="FunFam" id="3.30.60.30:FF:000004">
    <property type="entry name" value="SPARC isoform 1"/>
    <property type="match status" value="1"/>
</dbReference>
<dbReference type="Gene3D" id="3.30.60.30">
    <property type="match status" value="1"/>
</dbReference>
<dbReference type="Gene3D" id="1.10.238.10">
    <property type="entry name" value="EF-hand"/>
    <property type="match status" value="1"/>
</dbReference>
<dbReference type="InterPro" id="IPR011992">
    <property type="entry name" value="EF-hand-dom_pair"/>
</dbReference>
<dbReference type="InterPro" id="IPR018247">
    <property type="entry name" value="EF_Hand_1_Ca_BS"/>
</dbReference>
<dbReference type="InterPro" id="IPR002048">
    <property type="entry name" value="EF_hand_dom"/>
</dbReference>
<dbReference type="InterPro" id="IPR003645">
    <property type="entry name" value="Fol_N"/>
</dbReference>
<dbReference type="InterPro" id="IPR015369">
    <property type="entry name" value="Follistatin/Osteonectin_EGF"/>
</dbReference>
<dbReference type="InterPro" id="IPR002350">
    <property type="entry name" value="Kazal_dom"/>
</dbReference>
<dbReference type="InterPro" id="IPR036058">
    <property type="entry name" value="Kazal_dom_sf"/>
</dbReference>
<dbReference type="InterPro" id="IPR001999">
    <property type="entry name" value="Osteonectin_CS"/>
</dbReference>
<dbReference type="InterPro" id="IPR016359">
    <property type="entry name" value="SPARC-like_p1"/>
</dbReference>
<dbReference type="InterPro" id="IPR019577">
    <property type="entry name" value="SPARC/Testican_Ca-bd-dom"/>
</dbReference>
<dbReference type="PANTHER" id="PTHR13866">
    <property type="entry name" value="SPARC OSTEONECTIN"/>
    <property type="match status" value="1"/>
</dbReference>
<dbReference type="PANTHER" id="PTHR13866:SF16">
    <property type="entry name" value="SPARC-LIKE PROTEIN 1"/>
    <property type="match status" value="1"/>
</dbReference>
<dbReference type="Pfam" id="PF09289">
    <property type="entry name" value="FOLN"/>
    <property type="match status" value="1"/>
</dbReference>
<dbReference type="Pfam" id="PF07648">
    <property type="entry name" value="Kazal_2"/>
    <property type="match status" value="1"/>
</dbReference>
<dbReference type="Pfam" id="PF10591">
    <property type="entry name" value="SPARC_Ca_bdg"/>
    <property type="match status" value="1"/>
</dbReference>
<dbReference type="PIRSF" id="PIRSF002574">
    <property type="entry name" value="SPARC-like_p1"/>
    <property type="match status" value="1"/>
</dbReference>
<dbReference type="SMART" id="SM00274">
    <property type="entry name" value="FOLN"/>
    <property type="match status" value="1"/>
</dbReference>
<dbReference type="SMART" id="SM00280">
    <property type="entry name" value="KAZAL"/>
    <property type="match status" value="1"/>
</dbReference>
<dbReference type="SUPFAM" id="SSF47473">
    <property type="entry name" value="EF-hand"/>
    <property type="match status" value="1"/>
</dbReference>
<dbReference type="SUPFAM" id="SSF57196">
    <property type="entry name" value="EGF/Laminin"/>
    <property type="match status" value="1"/>
</dbReference>
<dbReference type="SUPFAM" id="SSF100895">
    <property type="entry name" value="Kazal-type serine protease inhibitors"/>
    <property type="match status" value="1"/>
</dbReference>
<dbReference type="PROSITE" id="PS00018">
    <property type="entry name" value="EF_HAND_1"/>
    <property type="match status" value="1"/>
</dbReference>
<dbReference type="PROSITE" id="PS50222">
    <property type="entry name" value="EF_HAND_2"/>
    <property type="match status" value="1"/>
</dbReference>
<dbReference type="PROSITE" id="PS51465">
    <property type="entry name" value="KAZAL_2"/>
    <property type="match status" value="1"/>
</dbReference>
<dbReference type="PROSITE" id="PS00612">
    <property type="entry name" value="OSTEONECTIN_1"/>
    <property type="match status" value="1"/>
</dbReference>
<dbReference type="PROSITE" id="PS00613">
    <property type="entry name" value="OSTEONECTIN_2"/>
    <property type="match status" value="1"/>
</dbReference>